<protein>
    <recommendedName>
        <fullName evidence="1">Large ribosomal subunit protein uL16</fullName>
    </recommendedName>
    <alternativeName>
        <fullName evidence="3">50S ribosomal protein L16</fullName>
    </alternativeName>
</protein>
<accession>Q0S3G9</accession>
<comment type="function">
    <text evidence="1">Binds 23S rRNA and is also seen to make contacts with the A and possibly P site tRNAs.</text>
</comment>
<comment type="subunit">
    <text evidence="1">Part of the 50S ribosomal subunit.</text>
</comment>
<comment type="similarity">
    <text evidence="1">Belongs to the universal ribosomal protein uL16 family.</text>
</comment>
<proteinExistence type="inferred from homology"/>
<dbReference type="EMBL" id="CP000431">
    <property type="protein sequence ID" value="ABG97917.1"/>
    <property type="molecule type" value="Genomic_DNA"/>
</dbReference>
<dbReference type="RefSeq" id="WP_005239636.1">
    <property type="nucleotide sequence ID" value="NC_008268.1"/>
</dbReference>
<dbReference type="SMR" id="Q0S3G9"/>
<dbReference type="GeneID" id="69890523"/>
<dbReference type="KEGG" id="rha:RHA1_ro06140"/>
<dbReference type="eggNOG" id="COG0197">
    <property type="taxonomic scope" value="Bacteria"/>
</dbReference>
<dbReference type="HOGENOM" id="CLU_078858_2_1_11"/>
<dbReference type="OrthoDB" id="9802589at2"/>
<dbReference type="Proteomes" id="UP000008710">
    <property type="component" value="Chromosome"/>
</dbReference>
<dbReference type="GO" id="GO:0022625">
    <property type="term" value="C:cytosolic large ribosomal subunit"/>
    <property type="evidence" value="ECO:0007669"/>
    <property type="project" value="TreeGrafter"/>
</dbReference>
<dbReference type="GO" id="GO:0019843">
    <property type="term" value="F:rRNA binding"/>
    <property type="evidence" value="ECO:0007669"/>
    <property type="project" value="UniProtKB-UniRule"/>
</dbReference>
<dbReference type="GO" id="GO:0003735">
    <property type="term" value="F:structural constituent of ribosome"/>
    <property type="evidence" value="ECO:0007669"/>
    <property type="project" value="InterPro"/>
</dbReference>
<dbReference type="GO" id="GO:0000049">
    <property type="term" value="F:tRNA binding"/>
    <property type="evidence" value="ECO:0007669"/>
    <property type="project" value="UniProtKB-KW"/>
</dbReference>
<dbReference type="GO" id="GO:0006412">
    <property type="term" value="P:translation"/>
    <property type="evidence" value="ECO:0007669"/>
    <property type="project" value="UniProtKB-UniRule"/>
</dbReference>
<dbReference type="CDD" id="cd01433">
    <property type="entry name" value="Ribosomal_L16_L10e"/>
    <property type="match status" value="1"/>
</dbReference>
<dbReference type="FunFam" id="3.90.1170.10:FF:000001">
    <property type="entry name" value="50S ribosomal protein L16"/>
    <property type="match status" value="1"/>
</dbReference>
<dbReference type="Gene3D" id="3.90.1170.10">
    <property type="entry name" value="Ribosomal protein L10e/L16"/>
    <property type="match status" value="1"/>
</dbReference>
<dbReference type="HAMAP" id="MF_01342">
    <property type="entry name" value="Ribosomal_uL16"/>
    <property type="match status" value="1"/>
</dbReference>
<dbReference type="InterPro" id="IPR047873">
    <property type="entry name" value="Ribosomal_uL16"/>
</dbReference>
<dbReference type="InterPro" id="IPR000114">
    <property type="entry name" value="Ribosomal_uL16_bact-type"/>
</dbReference>
<dbReference type="InterPro" id="IPR020798">
    <property type="entry name" value="Ribosomal_uL16_CS"/>
</dbReference>
<dbReference type="InterPro" id="IPR016180">
    <property type="entry name" value="Ribosomal_uL16_dom"/>
</dbReference>
<dbReference type="InterPro" id="IPR036920">
    <property type="entry name" value="Ribosomal_uL16_sf"/>
</dbReference>
<dbReference type="NCBIfam" id="TIGR01164">
    <property type="entry name" value="rplP_bact"/>
    <property type="match status" value="1"/>
</dbReference>
<dbReference type="PANTHER" id="PTHR12220">
    <property type="entry name" value="50S/60S RIBOSOMAL PROTEIN L16"/>
    <property type="match status" value="1"/>
</dbReference>
<dbReference type="PANTHER" id="PTHR12220:SF13">
    <property type="entry name" value="LARGE RIBOSOMAL SUBUNIT PROTEIN UL16M"/>
    <property type="match status" value="1"/>
</dbReference>
<dbReference type="Pfam" id="PF00252">
    <property type="entry name" value="Ribosomal_L16"/>
    <property type="match status" value="1"/>
</dbReference>
<dbReference type="PRINTS" id="PR00060">
    <property type="entry name" value="RIBOSOMALL16"/>
</dbReference>
<dbReference type="SUPFAM" id="SSF54686">
    <property type="entry name" value="Ribosomal protein L16p/L10e"/>
    <property type="match status" value="1"/>
</dbReference>
<dbReference type="PROSITE" id="PS00586">
    <property type="entry name" value="RIBOSOMAL_L16_1"/>
    <property type="match status" value="1"/>
</dbReference>
<dbReference type="PROSITE" id="PS00701">
    <property type="entry name" value="RIBOSOMAL_L16_2"/>
    <property type="match status" value="1"/>
</dbReference>
<gene>
    <name evidence="1" type="primary">rplP</name>
    <name type="ordered locus">RHA1_ro06140</name>
</gene>
<reference key="1">
    <citation type="journal article" date="2006" name="Proc. Natl. Acad. Sci. U.S.A.">
        <title>The complete genome of Rhodococcus sp. RHA1 provides insights into a catabolic powerhouse.</title>
        <authorList>
            <person name="McLeod M.P."/>
            <person name="Warren R.L."/>
            <person name="Hsiao W.W.L."/>
            <person name="Araki N."/>
            <person name="Myhre M."/>
            <person name="Fernandes C."/>
            <person name="Miyazawa D."/>
            <person name="Wong W."/>
            <person name="Lillquist A.L."/>
            <person name="Wang D."/>
            <person name="Dosanjh M."/>
            <person name="Hara H."/>
            <person name="Petrescu A."/>
            <person name="Morin R.D."/>
            <person name="Yang G."/>
            <person name="Stott J.M."/>
            <person name="Schein J.E."/>
            <person name="Shin H."/>
            <person name="Smailus D."/>
            <person name="Siddiqui A.S."/>
            <person name="Marra M.A."/>
            <person name="Jones S.J.M."/>
            <person name="Holt R."/>
            <person name="Brinkman F.S.L."/>
            <person name="Miyauchi K."/>
            <person name="Fukuda M."/>
            <person name="Davies J.E."/>
            <person name="Mohn W.W."/>
            <person name="Eltis L.D."/>
        </authorList>
    </citation>
    <scope>NUCLEOTIDE SEQUENCE [LARGE SCALE GENOMIC DNA]</scope>
    <source>
        <strain>RHA1</strain>
    </source>
</reference>
<sequence length="138" mass="15892">MLIPRRVKHRKQHHPSRSGAAKGGTQVTFGDYGIQALEPAYITNRQIESARIAMTRHIKRGGKIWINIFPDRPLTKKPAETRMGSGKGSPEWWIANVKPGRVMFEMSYPNEEIAREALRRAMHKLPCKCRIVTREEQF</sequence>
<organism>
    <name type="scientific">Rhodococcus jostii (strain RHA1)</name>
    <dbReference type="NCBI Taxonomy" id="101510"/>
    <lineage>
        <taxon>Bacteria</taxon>
        <taxon>Bacillati</taxon>
        <taxon>Actinomycetota</taxon>
        <taxon>Actinomycetes</taxon>
        <taxon>Mycobacteriales</taxon>
        <taxon>Nocardiaceae</taxon>
        <taxon>Rhodococcus</taxon>
    </lineage>
</organism>
<keyword id="KW-0687">Ribonucleoprotein</keyword>
<keyword id="KW-0689">Ribosomal protein</keyword>
<keyword id="KW-0694">RNA-binding</keyword>
<keyword id="KW-0699">rRNA-binding</keyword>
<keyword id="KW-0820">tRNA-binding</keyword>
<name>RL16_RHOJR</name>
<feature type="chain" id="PRO_0000251660" description="Large ribosomal subunit protein uL16">
    <location>
        <begin position="1"/>
        <end position="138"/>
    </location>
</feature>
<feature type="region of interest" description="Disordered" evidence="2">
    <location>
        <begin position="1"/>
        <end position="25"/>
    </location>
</feature>
<feature type="compositionally biased region" description="Basic residues" evidence="2">
    <location>
        <begin position="1"/>
        <end position="16"/>
    </location>
</feature>
<evidence type="ECO:0000255" key="1">
    <source>
        <dbReference type="HAMAP-Rule" id="MF_01342"/>
    </source>
</evidence>
<evidence type="ECO:0000256" key="2">
    <source>
        <dbReference type="SAM" id="MobiDB-lite"/>
    </source>
</evidence>
<evidence type="ECO:0000305" key="3"/>